<keyword id="KW-0472">Membrane</keyword>
<keyword id="KW-1185">Reference proteome</keyword>
<keyword id="KW-0732">Signal</keyword>
<keyword id="KW-0812">Transmembrane</keyword>
<keyword id="KW-1133">Transmembrane helix</keyword>
<sequence length="196" mass="21052">MAPGPSATQGILLLLPLLPLSQVTLGSADRNCDPSDQCPPQARWSSLWHVGLILLAILLMLLCGVTASCVRFCCLRKQTHTQSHTPAAWQPCDGTVIPVDSDSPAHSTVTSYSSVQYPLGMRLPLYFGEPDPDSMVPPTYSLYASELPPSYDEVVKMIKAREEVAAPSEKTNSLPEALEPETTGGPQEPGPSAQRP</sequence>
<feature type="signal peptide" evidence="1">
    <location>
        <begin position="1"/>
        <end position="28"/>
    </location>
</feature>
<feature type="chain" id="PRO_0000284058" description="Transmembrane protein 52">
    <location>
        <begin position="29"/>
        <end position="196"/>
    </location>
</feature>
<feature type="transmembrane region" description="Helical" evidence="1">
    <location>
        <begin position="47"/>
        <end position="67"/>
    </location>
</feature>
<feature type="region of interest" description="Disordered" evidence="2">
    <location>
        <begin position="162"/>
        <end position="196"/>
    </location>
</feature>
<accession>Q9D702</accession>
<gene>
    <name type="primary">Tmem52</name>
</gene>
<name>TMM52_MOUSE</name>
<protein>
    <recommendedName>
        <fullName>Transmembrane protein 52</fullName>
    </recommendedName>
</protein>
<evidence type="ECO:0000255" key="1"/>
<evidence type="ECO:0000256" key="2">
    <source>
        <dbReference type="SAM" id="MobiDB-lite"/>
    </source>
</evidence>
<evidence type="ECO:0000305" key="3"/>
<reference key="1">
    <citation type="journal article" date="2005" name="Science">
        <title>The transcriptional landscape of the mammalian genome.</title>
        <authorList>
            <person name="Carninci P."/>
            <person name="Kasukawa T."/>
            <person name="Katayama S."/>
            <person name="Gough J."/>
            <person name="Frith M.C."/>
            <person name="Maeda N."/>
            <person name="Oyama R."/>
            <person name="Ravasi T."/>
            <person name="Lenhard B."/>
            <person name="Wells C."/>
            <person name="Kodzius R."/>
            <person name="Shimokawa K."/>
            <person name="Bajic V.B."/>
            <person name="Brenner S.E."/>
            <person name="Batalov S."/>
            <person name="Forrest A.R."/>
            <person name="Zavolan M."/>
            <person name="Davis M.J."/>
            <person name="Wilming L.G."/>
            <person name="Aidinis V."/>
            <person name="Allen J.E."/>
            <person name="Ambesi-Impiombato A."/>
            <person name="Apweiler R."/>
            <person name="Aturaliya R.N."/>
            <person name="Bailey T.L."/>
            <person name="Bansal M."/>
            <person name="Baxter L."/>
            <person name="Beisel K.W."/>
            <person name="Bersano T."/>
            <person name="Bono H."/>
            <person name="Chalk A.M."/>
            <person name="Chiu K.P."/>
            <person name="Choudhary V."/>
            <person name="Christoffels A."/>
            <person name="Clutterbuck D.R."/>
            <person name="Crowe M.L."/>
            <person name="Dalla E."/>
            <person name="Dalrymple B.P."/>
            <person name="de Bono B."/>
            <person name="Della Gatta G."/>
            <person name="di Bernardo D."/>
            <person name="Down T."/>
            <person name="Engstrom P."/>
            <person name="Fagiolini M."/>
            <person name="Faulkner G."/>
            <person name="Fletcher C.F."/>
            <person name="Fukushima T."/>
            <person name="Furuno M."/>
            <person name="Futaki S."/>
            <person name="Gariboldi M."/>
            <person name="Georgii-Hemming P."/>
            <person name="Gingeras T.R."/>
            <person name="Gojobori T."/>
            <person name="Green R.E."/>
            <person name="Gustincich S."/>
            <person name="Harbers M."/>
            <person name="Hayashi Y."/>
            <person name="Hensch T.K."/>
            <person name="Hirokawa N."/>
            <person name="Hill D."/>
            <person name="Huminiecki L."/>
            <person name="Iacono M."/>
            <person name="Ikeo K."/>
            <person name="Iwama A."/>
            <person name="Ishikawa T."/>
            <person name="Jakt M."/>
            <person name="Kanapin A."/>
            <person name="Katoh M."/>
            <person name="Kawasawa Y."/>
            <person name="Kelso J."/>
            <person name="Kitamura H."/>
            <person name="Kitano H."/>
            <person name="Kollias G."/>
            <person name="Krishnan S.P."/>
            <person name="Kruger A."/>
            <person name="Kummerfeld S.K."/>
            <person name="Kurochkin I.V."/>
            <person name="Lareau L.F."/>
            <person name="Lazarevic D."/>
            <person name="Lipovich L."/>
            <person name="Liu J."/>
            <person name="Liuni S."/>
            <person name="McWilliam S."/>
            <person name="Madan Babu M."/>
            <person name="Madera M."/>
            <person name="Marchionni L."/>
            <person name="Matsuda H."/>
            <person name="Matsuzawa S."/>
            <person name="Miki H."/>
            <person name="Mignone F."/>
            <person name="Miyake S."/>
            <person name="Morris K."/>
            <person name="Mottagui-Tabar S."/>
            <person name="Mulder N."/>
            <person name="Nakano N."/>
            <person name="Nakauchi H."/>
            <person name="Ng P."/>
            <person name="Nilsson R."/>
            <person name="Nishiguchi S."/>
            <person name="Nishikawa S."/>
            <person name="Nori F."/>
            <person name="Ohara O."/>
            <person name="Okazaki Y."/>
            <person name="Orlando V."/>
            <person name="Pang K.C."/>
            <person name="Pavan W.J."/>
            <person name="Pavesi G."/>
            <person name="Pesole G."/>
            <person name="Petrovsky N."/>
            <person name="Piazza S."/>
            <person name="Reed J."/>
            <person name="Reid J.F."/>
            <person name="Ring B.Z."/>
            <person name="Ringwald M."/>
            <person name="Rost B."/>
            <person name="Ruan Y."/>
            <person name="Salzberg S.L."/>
            <person name="Sandelin A."/>
            <person name="Schneider C."/>
            <person name="Schoenbach C."/>
            <person name="Sekiguchi K."/>
            <person name="Semple C.A."/>
            <person name="Seno S."/>
            <person name="Sessa L."/>
            <person name="Sheng Y."/>
            <person name="Shibata Y."/>
            <person name="Shimada H."/>
            <person name="Shimada K."/>
            <person name="Silva D."/>
            <person name="Sinclair B."/>
            <person name="Sperling S."/>
            <person name="Stupka E."/>
            <person name="Sugiura K."/>
            <person name="Sultana R."/>
            <person name="Takenaka Y."/>
            <person name="Taki K."/>
            <person name="Tammoja K."/>
            <person name="Tan S.L."/>
            <person name="Tang S."/>
            <person name="Taylor M.S."/>
            <person name="Tegner J."/>
            <person name="Teichmann S.A."/>
            <person name="Ueda H.R."/>
            <person name="van Nimwegen E."/>
            <person name="Verardo R."/>
            <person name="Wei C.L."/>
            <person name="Yagi K."/>
            <person name="Yamanishi H."/>
            <person name="Zabarovsky E."/>
            <person name="Zhu S."/>
            <person name="Zimmer A."/>
            <person name="Hide W."/>
            <person name="Bult C."/>
            <person name="Grimmond S.M."/>
            <person name="Teasdale R.D."/>
            <person name="Liu E.T."/>
            <person name="Brusic V."/>
            <person name="Quackenbush J."/>
            <person name="Wahlestedt C."/>
            <person name="Mattick J.S."/>
            <person name="Hume D.A."/>
            <person name="Kai C."/>
            <person name="Sasaki D."/>
            <person name="Tomaru Y."/>
            <person name="Fukuda S."/>
            <person name="Kanamori-Katayama M."/>
            <person name="Suzuki M."/>
            <person name="Aoki J."/>
            <person name="Arakawa T."/>
            <person name="Iida J."/>
            <person name="Imamura K."/>
            <person name="Itoh M."/>
            <person name="Kato T."/>
            <person name="Kawaji H."/>
            <person name="Kawagashira N."/>
            <person name="Kawashima T."/>
            <person name="Kojima M."/>
            <person name="Kondo S."/>
            <person name="Konno H."/>
            <person name="Nakano K."/>
            <person name="Ninomiya N."/>
            <person name="Nishio T."/>
            <person name="Okada M."/>
            <person name="Plessy C."/>
            <person name="Shibata K."/>
            <person name="Shiraki T."/>
            <person name="Suzuki S."/>
            <person name="Tagami M."/>
            <person name="Waki K."/>
            <person name="Watahiki A."/>
            <person name="Okamura-Oho Y."/>
            <person name="Suzuki H."/>
            <person name="Kawai J."/>
            <person name="Hayashizaki Y."/>
        </authorList>
    </citation>
    <scope>NUCLEOTIDE SEQUENCE [LARGE SCALE MRNA]</scope>
    <source>
        <strain>C57BL/6J</strain>
        <tissue>Tongue</tissue>
    </source>
</reference>
<reference key="2">
    <citation type="journal article" date="2009" name="PLoS Biol.">
        <title>Lineage-specific biology revealed by a finished genome assembly of the mouse.</title>
        <authorList>
            <person name="Church D.M."/>
            <person name="Goodstadt L."/>
            <person name="Hillier L.W."/>
            <person name="Zody M.C."/>
            <person name="Goldstein S."/>
            <person name="She X."/>
            <person name="Bult C.J."/>
            <person name="Agarwala R."/>
            <person name="Cherry J.L."/>
            <person name="DiCuccio M."/>
            <person name="Hlavina W."/>
            <person name="Kapustin Y."/>
            <person name="Meric P."/>
            <person name="Maglott D."/>
            <person name="Birtle Z."/>
            <person name="Marques A.C."/>
            <person name="Graves T."/>
            <person name="Zhou S."/>
            <person name="Teague B."/>
            <person name="Potamousis K."/>
            <person name="Churas C."/>
            <person name="Place M."/>
            <person name="Herschleb J."/>
            <person name="Runnheim R."/>
            <person name="Forrest D."/>
            <person name="Amos-Landgraf J."/>
            <person name="Schwartz D.C."/>
            <person name="Cheng Z."/>
            <person name="Lindblad-Toh K."/>
            <person name="Eichler E.E."/>
            <person name="Ponting C.P."/>
        </authorList>
    </citation>
    <scope>NUCLEOTIDE SEQUENCE [LARGE SCALE GENOMIC DNA]</scope>
    <source>
        <strain>C57BL/6J</strain>
    </source>
</reference>
<proteinExistence type="evidence at transcript level"/>
<organism>
    <name type="scientific">Mus musculus</name>
    <name type="common">Mouse</name>
    <dbReference type="NCBI Taxonomy" id="10090"/>
    <lineage>
        <taxon>Eukaryota</taxon>
        <taxon>Metazoa</taxon>
        <taxon>Chordata</taxon>
        <taxon>Craniata</taxon>
        <taxon>Vertebrata</taxon>
        <taxon>Euteleostomi</taxon>
        <taxon>Mammalia</taxon>
        <taxon>Eutheria</taxon>
        <taxon>Euarchontoglires</taxon>
        <taxon>Glires</taxon>
        <taxon>Rodentia</taxon>
        <taxon>Myomorpha</taxon>
        <taxon>Muroidea</taxon>
        <taxon>Muridae</taxon>
        <taxon>Murinae</taxon>
        <taxon>Mus</taxon>
        <taxon>Mus</taxon>
    </lineage>
</organism>
<dbReference type="EMBL" id="AK009779">
    <property type="protein sequence ID" value="BAB26499.1"/>
    <property type="molecule type" value="mRNA"/>
</dbReference>
<dbReference type="EMBL" id="AL670227">
    <property type="status" value="NOT_ANNOTATED_CDS"/>
    <property type="molecule type" value="Genomic_DNA"/>
</dbReference>
<dbReference type="CCDS" id="CCDS57319.1"/>
<dbReference type="RefSeq" id="NP_001240785.1">
    <property type="nucleotide sequence ID" value="NM_001253856.1"/>
</dbReference>
<dbReference type="SMR" id="Q9D702"/>
<dbReference type="FunCoup" id="Q9D702">
    <property type="interactions" value="29"/>
</dbReference>
<dbReference type="STRING" id="10090.ENSMUSP00000136919"/>
<dbReference type="PaxDb" id="10090-ENSMUSP00000136919"/>
<dbReference type="ProteomicsDB" id="259035"/>
<dbReference type="Antibodypedia" id="12513">
    <property type="antibodies" value="7 antibodies from 5 providers"/>
</dbReference>
<dbReference type="Ensembl" id="ENSMUST00000023920.3">
    <property type="protein sequence ID" value="ENSMUSP00000023920.3"/>
    <property type="gene ID" value="ENSMUSG00000023153.10"/>
</dbReference>
<dbReference type="GeneID" id="69671"/>
<dbReference type="KEGG" id="mmu:69671"/>
<dbReference type="UCSC" id="uc008wdo.3">
    <property type="organism name" value="mouse"/>
</dbReference>
<dbReference type="AGR" id="MGI:1916921"/>
<dbReference type="CTD" id="339456"/>
<dbReference type="MGI" id="MGI:1916921">
    <property type="gene designation" value="Tmem52"/>
</dbReference>
<dbReference type="VEuPathDB" id="HostDB:ENSMUSG00000023153"/>
<dbReference type="eggNOG" id="ENOG502S32F">
    <property type="taxonomic scope" value="Eukaryota"/>
</dbReference>
<dbReference type="GeneTree" id="ENSGT00730000111432"/>
<dbReference type="InParanoid" id="Q9D702"/>
<dbReference type="OrthoDB" id="9424925at2759"/>
<dbReference type="BioGRID-ORCS" id="69671">
    <property type="hits" value="5 hits in 79 CRISPR screens"/>
</dbReference>
<dbReference type="PRO" id="PR:Q9D702"/>
<dbReference type="Proteomes" id="UP000000589">
    <property type="component" value="Chromosome 4"/>
</dbReference>
<dbReference type="RNAct" id="Q9D702">
    <property type="molecule type" value="protein"/>
</dbReference>
<dbReference type="Bgee" id="ENSMUSG00000023153">
    <property type="expression patterns" value="Expressed in hindlimb stylopod muscle and 71 other cell types or tissues"/>
</dbReference>
<dbReference type="ExpressionAtlas" id="Q9D702">
    <property type="expression patterns" value="baseline and differential"/>
</dbReference>
<dbReference type="GO" id="GO:0016020">
    <property type="term" value="C:membrane"/>
    <property type="evidence" value="ECO:0007669"/>
    <property type="project" value="UniProtKB-SubCell"/>
</dbReference>
<dbReference type="InterPro" id="IPR038942">
    <property type="entry name" value="TMEM52"/>
</dbReference>
<dbReference type="PANTHER" id="PTHR33955">
    <property type="entry name" value="TRANSMEMBRANE PROTEIN 52"/>
    <property type="match status" value="1"/>
</dbReference>
<dbReference type="PANTHER" id="PTHR33955:SF2">
    <property type="entry name" value="TRANSMEMBRANE PROTEIN 52"/>
    <property type="match status" value="1"/>
</dbReference>
<dbReference type="Pfam" id="PF14979">
    <property type="entry name" value="TMEM52"/>
    <property type="match status" value="1"/>
</dbReference>
<comment type="subcellular location">
    <subcellularLocation>
        <location evidence="3">Membrane</location>
        <topology evidence="3">Single-pass membrane protein</topology>
    </subcellularLocation>
</comment>